<accession>P0AFF2</accession>
<accession>P33031</accession>
<accession>P77236</accession>
<sequence length="400" mass="43476">MDRVLHFVLALAVVAILALLVSSDRKKIRIRYVIQLLVIEVLLAWFFLNSDVGLGFVKGFSEMFEKLLGFANEGTNFVFGSMNDQGLAFFFLKVLCPIVFISALIGILQHIRVLPVIIRAIGFLLSKVNGMGKLESFNAVSSLILGQSENFIAYKDILGKISRNRMYTMAATAMSTVSMSIVGAYMTMLEPKYVVAALVLNMFSTFIVLSLINPYRVDASEENIQMSNLHEGQSFFEMLGEYILAGFKVAIIVAAMLIGFIALIAALNALFATVTGWFGYSISFQGILGYIFYPIAWVMGVPSSEALQVGSIMATKLVSNEFVAMMDLQKIASTLSPRAEGIISVFLVSFANFSSIGIIAGAVKGLNEEQGNVVSRFGLKLVYGSTLVSVLSASIAALVL</sequence>
<feature type="chain" id="PRO_0000070454" description="Nucleoside permease NupC">
    <location>
        <begin position="1"/>
        <end position="400"/>
    </location>
</feature>
<feature type="topological domain" description="Cytoplasmic" evidence="9">
    <location>
        <begin position="1"/>
        <end position="3"/>
    </location>
</feature>
<feature type="transmembrane region" description="Helical" evidence="1">
    <location>
        <begin position="4"/>
        <end position="24"/>
    </location>
</feature>
<feature type="topological domain" description="Periplasmic" evidence="9">
    <location>
        <begin position="25"/>
        <end position="36"/>
    </location>
</feature>
<feature type="transmembrane region" description="Helical" evidence="1">
    <location>
        <begin position="37"/>
        <end position="57"/>
    </location>
</feature>
<feature type="topological domain" description="Cytoplasmic" evidence="9">
    <location>
        <begin position="58"/>
        <end position="86"/>
    </location>
</feature>
<feature type="transmembrane region" description="Helical" evidence="1">
    <location>
        <begin position="87"/>
        <end position="107"/>
    </location>
</feature>
<feature type="topological domain" description="Periplasmic" evidence="9">
    <location>
        <begin position="108"/>
        <end position="168"/>
    </location>
</feature>
<feature type="transmembrane region" description="Helical" evidence="1">
    <location>
        <begin position="169"/>
        <end position="189"/>
    </location>
</feature>
<feature type="topological domain" description="Cytoplasmic" evidence="9">
    <location>
        <begin position="190"/>
        <end position="192"/>
    </location>
</feature>
<feature type="transmembrane region" description="Helical" evidence="1">
    <location>
        <begin position="193"/>
        <end position="213"/>
    </location>
</feature>
<feature type="topological domain" description="Periplasmic" evidence="9">
    <location>
        <begin position="214"/>
        <end position="250"/>
    </location>
</feature>
<feature type="transmembrane region" description="Helical" evidence="1">
    <location>
        <begin position="251"/>
        <end position="271"/>
    </location>
</feature>
<feature type="topological domain" description="Cytoplasmic" evidence="9">
    <location>
        <begin position="272"/>
        <end position="281"/>
    </location>
</feature>
<feature type="transmembrane region" description="Helical" evidence="1">
    <location>
        <begin position="282"/>
        <end position="302"/>
    </location>
</feature>
<feature type="topological domain" description="Periplasmic" evidence="9">
    <location>
        <begin position="303"/>
        <end position="341"/>
    </location>
</feature>
<feature type="transmembrane region" description="Helical" evidence="1">
    <location>
        <begin position="342"/>
        <end position="362"/>
    </location>
</feature>
<feature type="topological domain" description="Cytoplasmic" evidence="9">
    <location>
        <begin position="363"/>
        <end position="378"/>
    </location>
</feature>
<feature type="transmembrane region" description="Helical" evidence="1">
    <location>
        <begin position="379"/>
        <end position="399"/>
    </location>
</feature>
<feature type="topological domain" description="Periplasmic" evidence="5">
    <location>
        <position position="400"/>
    </location>
</feature>
<feature type="sequence conflict" description="In Ref. 1; CAA52821." evidence="9" ref="1">
    <location>
        <position position="82"/>
    </location>
</feature>
<feature type="sequence conflict" description="In Ref. 1; CAA52821." evidence="9" ref="1">
    <original>A</original>
    <variation>AE</variation>
    <location>
        <position position="88"/>
    </location>
</feature>
<gene>
    <name evidence="8" type="primary">nupC</name>
    <name type="synonym">cru</name>
    <name type="ordered locus">b2393</name>
    <name type="ordered locus">JW2389</name>
</gene>
<evidence type="ECO:0000255" key="1"/>
<evidence type="ECO:0000269" key="2">
    <source>
    </source>
</evidence>
<evidence type="ECO:0000269" key="3">
    <source>
    </source>
</evidence>
<evidence type="ECO:0000269" key="4">
    <source>
    </source>
</evidence>
<evidence type="ECO:0000269" key="5">
    <source>
    </source>
</evidence>
<evidence type="ECO:0000269" key="6">
    <source>
    </source>
</evidence>
<evidence type="ECO:0000269" key="7">
    <source>
    </source>
</evidence>
<evidence type="ECO:0000303" key="8">
    <source>
    </source>
</evidence>
<evidence type="ECO:0000305" key="9"/>
<dbReference type="EMBL" id="X74825">
    <property type="protein sequence ID" value="CAA52821.1"/>
    <property type="molecule type" value="Genomic_DNA"/>
</dbReference>
<dbReference type="EMBL" id="U00096">
    <property type="protein sequence ID" value="AAC75452.1"/>
    <property type="molecule type" value="Genomic_DNA"/>
</dbReference>
<dbReference type="EMBL" id="AP009048">
    <property type="protein sequence ID" value="BAA16263.1"/>
    <property type="molecule type" value="Genomic_DNA"/>
</dbReference>
<dbReference type="PIR" id="F65013">
    <property type="entry name" value="F65013"/>
</dbReference>
<dbReference type="RefSeq" id="NP_416894.1">
    <property type="nucleotide sequence ID" value="NC_000913.3"/>
</dbReference>
<dbReference type="RefSeq" id="WP_000376337.1">
    <property type="nucleotide sequence ID" value="NZ_STEB01000008.1"/>
</dbReference>
<dbReference type="SMR" id="P0AFF2"/>
<dbReference type="BioGRID" id="4259184">
    <property type="interactions" value="18"/>
</dbReference>
<dbReference type="FunCoup" id="P0AFF2">
    <property type="interactions" value="10"/>
</dbReference>
<dbReference type="STRING" id="511145.b2393"/>
<dbReference type="TCDB" id="2.A.41.1.1">
    <property type="family name" value="the concentrative nucleoside transporter (cnt) family"/>
</dbReference>
<dbReference type="jPOST" id="P0AFF2"/>
<dbReference type="PaxDb" id="511145-b2393"/>
<dbReference type="EnsemblBacteria" id="AAC75452">
    <property type="protein sequence ID" value="AAC75452"/>
    <property type="gene ID" value="b2393"/>
</dbReference>
<dbReference type="GeneID" id="75202539"/>
<dbReference type="GeneID" id="946895"/>
<dbReference type="KEGG" id="ecj:JW2389"/>
<dbReference type="KEGG" id="eco:b2393"/>
<dbReference type="KEGG" id="ecoc:C3026_13300"/>
<dbReference type="PATRIC" id="fig|1411691.4.peg.4336"/>
<dbReference type="EchoBASE" id="EB1914"/>
<dbReference type="eggNOG" id="COG1972">
    <property type="taxonomic scope" value="Bacteria"/>
</dbReference>
<dbReference type="HOGENOM" id="CLU_016813_0_0_6"/>
<dbReference type="InParanoid" id="P0AFF2"/>
<dbReference type="OMA" id="CRDRKSI"/>
<dbReference type="OrthoDB" id="9766455at2"/>
<dbReference type="PhylomeDB" id="P0AFF2"/>
<dbReference type="BioCyc" id="EcoCyc:NUPC-MONOMER"/>
<dbReference type="BioCyc" id="MetaCyc:NUPC-MONOMER"/>
<dbReference type="PRO" id="PR:P0AFF2"/>
<dbReference type="Proteomes" id="UP000000625">
    <property type="component" value="Chromosome"/>
</dbReference>
<dbReference type="GO" id="GO:0005886">
    <property type="term" value="C:plasma membrane"/>
    <property type="evidence" value="ECO:0000314"/>
    <property type="project" value="EcoCyc"/>
</dbReference>
<dbReference type="GO" id="GO:0015212">
    <property type="term" value="F:cytidine transmembrane transporter activity"/>
    <property type="evidence" value="ECO:0000315"/>
    <property type="project" value="EcoliWiki"/>
</dbReference>
<dbReference type="GO" id="GO:0015506">
    <property type="term" value="F:nucleoside:proton symporter activity"/>
    <property type="evidence" value="ECO:0000314"/>
    <property type="project" value="EcoCyc"/>
</dbReference>
<dbReference type="GO" id="GO:0015213">
    <property type="term" value="F:uridine transmembrane transporter activity"/>
    <property type="evidence" value="ECO:0000315"/>
    <property type="project" value="EcoliWiki"/>
</dbReference>
<dbReference type="GO" id="GO:1901642">
    <property type="term" value="P:nucleoside transmembrane transport"/>
    <property type="evidence" value="ECO:0000314"/>
    <property type="project" value="EcoCyc"/>
</dbReference>
<dbReference type="InterPro" id="IPR008276">
    <property type="entry name" value="C_nuclsd_transpt"/>
</dbReference>
<dbReference type="InterPro" id="IPR018270">
    <property type="entry name" value="C_nuclsd_transpt_met_bac"/>
</dbReference>
<dbReference type="InterPro" id="IPR011657">
    <property type="entry name" value="CNT_C_dom"/>
</dbReference>
<dbReference type="InterPro" id="IPR002668">
    <property type="entry name" value="CNT_N_dom"/>
</dbReference>
<dbReference type="InterPro" id="IPR011642">
    <property type="entry name" value="Gate_dom"/>
</dbReference>
<dbReference type="NCBIfam" id="TIGR00804">
    <property type="entry name" value="nupC"/>
    <property type="match status" value="1"/>
</dbReference>
<dbReference type="PANTHER" id="PTHR10590:SF21">
    <property type="entry name" value="NUCLEOSIDE PERMEASE NUPC"/>
    <property type="match status" value="1"/>
</dbReference>
<dbReference type="PANTHER" id="PTHR10590">
    <property type="entry name" value="SODIUM/NUCLEOSIDE COTRANSPORTER"/>
    <property type="match status" value="1"/>
</dbReference>
<dbReference type="Pfam" id="PF07670">
    <property type="entry name" value="Gate"/>
    <property type="match status" value="1"/>
</dbReference>
<dbReference type="Pfam" id="PF07662">
    <property type="entry name" value="Nucleos_tra2_C"/>
    <property type="match status" value="1"/>
</dbReference>
<dbReference type="Pfam" id="PF01773">
    <property type="entry name" value="Nucleos_tra2_N"/>
    <property type="match status" value="1"/>
</dbReference>
<keyword id="KW-0997">Cell inner membrane</keyword>
<keyword id="KW-1003">Cell membrane</keyword>
<keyword id="KW-0472">Membrane</keyword>
<keyword id="KW-1185">Reference proteome</keyword>
<keyword id="KW-0769">Symport</keyword>
<keyword id="KW-0812">Transmembrane</keyword>
<keyword id="KW-1133">Transmembrane helix</keyword>
<keyword id="KW-0813">Transport</keyword>
<name>NUPC_ECOLI</name>
<comment type="function">
    <text evidence="2 3 4 6">Nucleoside transport protein that can transport adenosine, uridine, thymidine, cytidine and deoxycytidine (PubMed:11466294, PubMed:14668133, PubMed:15678184, PubMed:374403). Shows weak activity with inosine and xanthosine (PubMed:11466294, PubMed:14668133). Transport is driven by a proton motive force (PubMed:14668133, PubMed:374403). Does not transport guanosine, deoxyguanosine, hypoxanthine or uracil (PubMed:14668133, PubMed:374403). Also shows activity with the chemotherapeutic drugs 3'-azido-3'-deoxythymidine (AZT), 2',3'- dideoxycytidine (ddC) and 2'-deoxy-2',2'-difluorocytidine (gemcitabine) (PubMed:14668133).</text>
</comment>
<comment type="catalytic activity">
    <reaction evidence="3">
        <text>adenosine(in) + H(+)(in) = adenosine(out) + H(+)(out)</text>
        <dbReference type="Rhea" id="RHEA:29987"/>
        <dbReference type="ChEBI" id="CHEBI:15378"/>
        <dbReference type="ChEBI" id="CHEBI:16335"/>
    </reaction>
</comment>
<comment type="catalytic activity">
    <reaction evidence="3 6">
        <text>uridine(in) + H(+)(in) = uridine(out) + H(+)(out)</text>
        <dbReference type="Rhea" id="RHEA:29951"/>
        <dbReference type="ChEBI" id="CHEBI:15378"/>
        <dbReference type="ChEBI" id="CHEBI:16704"/>
    </reaction>
</comment>
<comment type="catalytic activity">
    <reaction evidence="3">
        <text>thymidine(in) + H(+)(in) = thymidine(out) + H(+)(out)</text>
        <dbReference type="Rhea" id="RHEA:29955"/>
        <dbReference type="ChEBI" id="CHEBI:15378"/>
        <dbReference type="ChEBI" id="CHEBI:17748"/>
    </reaction>
</comment>
<comment type="catalytic activity">
    <reaction evidence="3 6">
        <text>cytidine(in) + H(+)(in) = cytidine(out) + H(+)(out)</text>
        <dbReference type="Rhea" id="RHEA:29983"/>
        <dbReference type="ChEBI" id="CHEBI:15378"/>
        <dbReference type="ChEBI" id="CHEBI:17562"/>
    </reaction>
</comment>
<comment type="catalytic activity">
    <reaction evidence="6">
        <text>2'-deoxycytidine(in) + H(+)(in) = 2'-deoxycytidine(out) + H(+)(out)</text>
        <dbReference type="Rhea" id="RHEA:29975"/>
        <dbReference type="ChEBI" id="CHEBI:15378"/>
        <dbReference type="ChEBI" id="CHEBI:15698"/>
    </reaction>
</comment>
<comment type="activity regulation">
    <text evidence="6">Transport is inhibited by the proton uncoupler dinitrophenol (PubMed:374403). Inhibited by the nucleoside antibiotic showdomycin (PubMed:374403).</text>
</comment>
<comment type="biophysicochemical properties">
    <kinetics>
        <KM evidence="3">3.6 uM for uridine (at pH 5.5)</KM>
        <KM evidence="3">10 uM for uridine (at pH 6.5)</KM>
        <KM evidence="3">15 uM for uridine (at pH 7.5)</KM>
        <KM evidence="3">44 uM for uridine (at pH 8.5)</KM>
        <KM evidence="3">1.6 uM for adenosine (at pH 5.5)</KM>
        <KM evidence="3">112 uM for AZT (at pH 5.5)</KM>
        <KM evidence="3">130 uM for ddC (at pH 5.5)</KM>
        <KM evidence="3">6.3 uM for gemcitabine (at pH 5.5)</KM>
    </kinetics>
</comment>
<comment type="subcellular location">
    <subcellularLocation>
        <location evidence="5 7">Cell inner membrane</location>
        <topology evidence="1">Multi-pass membrane protein</topology>
    </subcellularLocation>
</comment>
<comment type="miscellaneous">
    <text evidence="4">Binding of nucleosides to NupC requires the presence of hydroxyl groups at the C-3' position of ribose.</text>
</comment>
<comment type="similarity">
    <text evidence="9">Belongs to the concentrative nucleoside transporter (CNT) (TC 2.A.41) family.</text>
</comment>
<protein>
    <recommendedName>
        <fullName evidence="9">Nucleoside permease NupC</fullName>
    </recommendedName>
    <alternativeName>
        <fullName evidence="9">Nucleoside-transport system protein NupC</fullName>
    </alternativeName>
</protein>
<proteinExistence type="evidence at protein level"/>
<organism>
    <name type="scientific">Escherichia coli (strain K12)</name>
    <dbReference type="NCBI Taxonomy" id="83333"/>
    <lineage>
        <taxon>Bacteria</taxon>
        <taxon>Pseudomonadati</taxon>
        <taxon>Pseudomonadota</taxon>
        <taxon>Gammaproteobacteria</taxon>
        <taxon>Enterobacterales</taxon>
        <taxon>Enterobacteriaceae</taxon>
        <taxon>Escherichia</taxon>
    </lineage>
</organism>
<reference key="1">
    <citation type="journal article" date="1994" name="Mol. Microbiol.">
        <title>Cloning of the nupC gene of Escherichia coli encoding a nucleoside transport system, and identification of an adjacent insertion element, IS 186.</title>
        <authorList>
            <person name="Craig J.E."/>
            <person name="Zhang Y."/>
            <person name="Gallagher M.P."/>
        </authorList>
    </citation>
    <scope>NUCLEOTIDE SEQUENCE [GENOMIC DNA]</scope>
    <scope>SUBCELLULAR LOCATION</scope>
    <source>
        <strain>K12</strain>
    </source>
</reference>
<reference key="2">
    <citation type="submission" date="1994-01" db="EMBL/GenBank/DDBJ databases">
        <authorList>
            <person name="Witzemann V."/>
        </authorList>
    </citation>
    <scope>SEQUENCE REVISION TO 15</scope>
</reference>
<reference key="3">
    <citation type="journal article" date="1997" name="DNA Res.">
        <title>Construction of a contiguous 874-kb sequence of the Escherichia coli-K12 genome corresponding to 50.0-68.8 min on the linkage map and analysis of its sequence features.</title>
        <authorList>
            <person name="Yamamoto Y."/>
            <person name="Aiba H."/>
            <person name="Baba T."/>
            <person name="Hayashi K."/>
            <person name="Inada T."/>
            <person name="Isono K."/>
            <person name="Itoh T."/>
            <person name="Kimura S."/>
            <person name="Kitagawa M."/>
            <person name="Makino K."/>
            <person name="Miki T."/>
            <person name="Mitsuhashi N."/>
            <person name="Mizobuchi K."/>
            <person name="Mori H."/>
            <person name="Nakade S."/>
            <person name="Nakamura Y."/>
            <person name="Nashimoto H."/>
            <person name="Oshima T."/>
            <person name="Oyama S."/>
            <person name="Saito N."/>
            <person name="Sampei G."/>
            <person name="Satoh Y."/>
            <person name="Sivasundaram S."/>
            <person name="Tagami H."/>
            <person name="Takahashi H."/>
            <person name="Takeda J."/>
            <person name="Takemoto K."/>
            <person name="Uehara K."/>
            <person name="Wada C."/>
            <person name="Yamagata S."/>
            <person name="Horiuchi T."/>
        </authorList>
    </citation>
    <scope>NUCLEOTIDE SEQUENCE [LARGE SCALE GENOMIC DNA]</scope>
    <source>
        <strain>K12 / W3110 / ATCC 27325 / DSM 5911</strain>
    </source>
</reference>
<reference key="4">
    <citation type="journal article" date="1997" name="Science">
        <title>The complete genome sequence of Escherichia coli K-12.</title>
        <authorList>
            <person name="Blattner F.R."/>
            <person name="Plunkett G. III"/>
            <person name="Bloch C.A."/>
            <person name="Perna N.T."/>
            <person name="Burland V."/>
            <person name="Riley M."/>
            <person name="Collado-Vides J."/>
            <person name="Glasner J.D."/>
            <person name="Rode C.K."/>
            <person name="Mayhew G.F."/>
            <person name="Gregor J."/>
            <person name="Davis N.W."/>
            <person name="Kirkpatrick H.A."/>
            <person name="Goeden M.A."/>
            <person name="Rose D.J."/>
            <person name="Mau B."/>
            <person name="Shao Y."/>
        </authorList>
    </citation>
    <scope>NUCLEOTIDE SEQUENCE [LARGE SCALE GENOMIC DNA]</scope>
    <source>
        <strain>K12 / MG1655 / ATCC 47076</strain>
    </source>
</reference>
<reference key="5">
    <citation type="journal article" date="2006" name="Mol. Syst. Biol.">
        <title>Highly accurate genome sequences of Escherichia coli K-12 strains MG1655 and W3110.</title>
        <authorList>
            <person name="Hayashi K."/>
            <person name="Morooka N."/>
            <person name="Yamamoto Y."/>
            <person name="Fujita K."/>
            <person name="Isono K."/>
            <person name="Choi S."/>
            <person name="Ohtsubo E."/>
            <person name="Baba T."/>
            <person name="Wanner B.L."/>
            <person name="Mori H."/>
            <person name="Horiuchi T."/>
        </authorList>
    </citation>
    <scope>NUCLEOTIDE SEQUENCE [LARGE SCALE GENOMIC DNA]</scope>
    <source>
        <strain>K12 / W3110 / ATCC 27325 / DSM 5911</strain>
    </source>
</reference>
<reference key="6">
    <citation type="journal article" date="1979" name="J. Biol. Chem.">
        <title>Nucleoside transport in cells and membrane vesicles from Escherichia coli K12.</title>
        <authorList>
            <person name="Munch-Petersen A."/>
            <person name="Mygind B."/>
            <person name="Nicolaisen A."/>
            <person name="Pihl N.J."/>
        </authorList>
    </citation>
    <scope>FUNCTION</scope>
    <scope>CATALYTIC ACTIVITY</scope>
    <scope>ACTIVITY REGULATION</scope>
</reference>
<reference key="7">
    <citation type="journal article" date="2001" name="J. Bacteriol.">
        <title>Specificity and topology of the Escherichia coli xanthosine permease, a representative of the NHS subfamily of the major facilitator superfamily.</title>
        <authorList>
            <person name="Noerholm M.H."/>
            <person name="Dandanell G."/>
        </authorList>
    </citation>
    <scope>FUNCTION</scope>
</reference>
<reference key="8">
    <citation type="journal article" date="2004" name="Mol. Membr. Biol.">
        <title>Transport of physiological nucleosides and anti-viral and anti-neoplastic nucleoside drugs by recombinant Escherichia coli nucleoside-H(+) cotransporter (NupC) produced in Xenopus laevis oocytes.</title>
        <authorList>
            <person name="Loewen S.K."/>
            <person name="Yao S.Y."/>
            <person name="Slugoski M.D."/>
            <person name="Mohabir N.N."/>
            <person name="Turner R.J."/>
            <person name="Mackey J.R."/>
            <person name="Weiner J.H."/>
            <person name="Gallagher M.P."/>
            <person name="Henderson P.J."/>
            <person name="Baldwin S.A."/>
            <person name="Cass C.E."/>
            <person name="Young J.D."/>
        </authorList>
    </citation>
    <scope>FUNCTION</scope>
    <scope>CATALYTIC ACTIVITY</scope>
    <scope>BIOPHYSICOCHEMICAL PROPERTIES</scope>
</reference>
<reference key="9">
    <citation type="journal article" date="2005" name="Org. Biomol. Chem.">
        <title>The nucleoside transport proteins, NupC and NupG, from Escherichia coli: specific structural motifs necessary for the binding of ligands.</title>
        <authorList>
            <person name="Patching S.G."/>
            <person name="Baldwin S.A."/>
            <person name="Baldwin A.D."/>
            <person name="Young J.D."/>
            <person name="Gallagher M.P."/>
            <person name="Henderson P.J."/>
            <person name="Herbert R.B."/>
        </authorList>
    </citation>
    <scope>FUNCTION</scope>
</reference>
<reference key="10">
    <citation type="journal article" date="2005" name="Science">
        <title>Global topology analysis of the Escherichia coli inner membrane proteome.</title>
        <authorList>
            <person name="Daley D.O."/>
            <person name="Rapp M."/>
            <person name="Granseth E."/>
            <person name="Melen K."/>
            <person name="Drew D."/>
            <person name="von Heijne G."/>
        </authorList>
    </citation>
    <scope>TOPOLOGY [LARGE SCALE ANALYSIS]</scope>
    <scope>SUBCELLULAR LOCATION</scope>
    <source>
        <strain>K12 / MG1655 / ATCC 47076</strain>
    </source>
</reference>